<name>MNTP_BIFLO</name>
<proteinExistence type="inferred from homology"/>
<evidence type="ECO:0000255" key="1">
    <source>
        <dbReference type="HAMAP-Rule" id="MF_01521"/>
    </source>
</evidence>
<dbReference type="EMBL" id="AE014295">
    <property type="protein sequence ID" value="AAN24226.1"/>
    <property type="molecule type" value="Genomic_DNA"/>
</dbReference>
<dbReference type="RefSeq" id="NP_695590.1">
    <property type="nucleotide sequence ID" value="NC_004307.2"/>
</dbReference>
<dbReference type="RefSeq" id="WP_007051517.1">
    <property type="nucleotide sequence ID" value="NC_004307.2"/>
</dbReference>
<dbReference type="STRING" id="206672.BL0390"/>
<dbReference type="EnsemblBacteria" id="AAN24226">
    <property type="protein sequence ID" value="AAN24226"/>
    <property type="gene ID" value="BL0390"/>
</dbReference>
<dbReference type="KEGG" id="blo:BL0390"/>
<dbReference type="PATRIC" id="fig|206672.9.peg.1132"/>
<dbReference type="HOGENOM" id="CLU_096410_3_0_11"/>
<dbReference type="OrthoDB" id="9811590at2"/>
<dbReference type="PhylomeDB" id="Q8G782"/>
<dbReference type="Proteomes" id="UP000000439">
    <property type="component" value="Chromosome"/>
</dbReference>
<dbReference type="GO" id="GO:0005886">
    <property type="term" value="C:plasma membrane"/>
    <property type="evidence" value="ECO:0007669"/>
    <property type="project" value="UniProtKB-SubCell"/>
</dbReference>
<dbReference type="GO" id="GO:0005384">
    <property type="term" value="F:manganese ion transmembrane transporter activity"/>
    <property type="evidence" value="ECO:0007669"/>
    <property type="project" value="UniProtKB-UniRule"/>
</dbReference>
<dbReference type="HAMAP" id="MF_01521">
    <property type="entry name" value="MntP_pump"/>
    <property type="match status" value="1"/>
</dbReference>
<dbReference type="InterPro" id="IPR003810">
    <property type="entry name" value="Mntp/YtaF"/>
</dbReference>
<dbReference type="InterPro" id="IPR022929">
    <property type="entry name" value="Put_MntP"/>
</dbReference>
<dbReference type="PANTHER" id="PTHR35529">
    <property type="entry name" value="MANGANESE EFFLUX PUMP MNTP-RELATED"/>
    <property type="match status" value="1"/>
</dbReference>
<dbReference type="PANTHER" id="PTHR35529:SF1">
    <property type="entry name" value="MANGANESE EFFLUX PUMP MNTP-RELATED"/>
    <property type="match status" value="1"/>
</dbReference>
<dbReference type="Pfam" id="PF02659">
    <property type="entry name" value="Mntp"/>
    <property type="match status" value="1"/>
</dbReference>
<accession>Q8G782</accession>
<comment type="function">
    <text evidence="1">Probably functions as a manganese efflux pump.</text>
</comment>
<comment type="subcellular location">
    <subcellularLocation>
        <location evidence="1">Cell membrane</location>
        <topology evidence="1">Multi-pass membrane protein</topology>
    </subcellularLocation>
</comment>
<comment type="similarity">
    <text evidence="1">Belongs to the MntP (TC 9.B.29) family.</text>
</comment>
<sequence length="194" mass="21072">MISIIIQILLISVSVAMDAFAVSIGKGLTVSRVRVQDAVKSTLWFGGFQMLFPILGYFAASTFSKYVTQFDHWIIFALLVFIGGNMVHEAFEEDEENSKETAQFDWKHMLPLAVACSIDAFAVGVSLAFMFTKAHMAFAILSIGVVTGLFSAAGLHIGRAFGSRWQKPAQIAGGVVLILLGIKVLLEHLGVIAF</sequence>
<keyword id="KW-1003">Cell membrane</keyword>
<keyword id="KW-0406">Ion transport</keyword>
<keyword id="KW-0464">Manganese</keyword>
<keyword id="KW-0472">Membrane</keyword>
<keyword id="KW-1185">Reference proteome</keyword>
<keyword id="KW-0812">Transmembrane</keyword>
<keyword id="KW-1133">Transmembrane helix</keyword>
<keyword id="KW-0813">Transport</keyword>
<reference key="1">
    <citation type="journal article" date="2002" name="Proc. Natl. Acad. Sci. U.S.A.">
        <title>The genome sequence of Bifidobacterium longum reflects its adaptation to the human gastrointestinal tract.</title>
        <authorList>
            <person name="Schell M.A."/>
            <person name="Karmirantzou M."/>
            <person name="Snel B."/>
            <person name="Vilanova D."/>
            <person name="Berger B."/>
            <person name="Pessi G."/>
            <person name="Zwahlen M.-C."/>
            <person name="Desiere F."/>
            <person name="Bork P."/>
            <person name="Delley M."/>
            <person name="Pridmore R.D."/>
            <person name="Arigoni F."/>
        </authorList>
    </citation>
    <scope>NUCLEOTIDE SEQUENCE [LARGE SCALE GENOMIC DNA]</scope>
    <source>
        <strain>NCC 2705</strain>
    </source>
</reference>
<organism>
    <name type="scientific">Bifidobacterium longum (strain NCC 2705)</name>
    <dbReference type="NCBI Taxonomy" id="206672"/>
    <lineage>
        <taxon>Bacteria</taxon>
        <taxon>Bacillati</taxon>
        <taxon>Actinomycetota</taxon>
        <taxon>Actinomycetes</taxon>
        <taxon>Bifidobacteriales</taxon>
        <taxon>Bifidobacteriaceae</taxon>
        <taxon>Bifidobacterium</taxon>
    </lineage>
</organism>
<feature type="chain" id="PRO_0000155639" description="Putative manganese efflux pump MntP">
    <location>
        <begin position="1"/>
        <end position="194"/>
    </location>
</feature>
<feature type="transmembrane region" description="Helical" evidence="1">
    <location>
        <begin position="2"/>
        <end position="22"/>
    </location>
</feature>
<feature type="transmembrane region" description="Helical" evidence="1">
    <location>
        <begin position="43"/>
        <end position="63"/>
    </location>
</feature>
<feature type="transmembrane region" description="Helical" evidence="1">
    <location>
        <begin position="67"/>
        <end position="87"/>
    </location>
</feature>
<feature type="transmembrane region" description="Helical" evidence="1">
    <location>
        <begin position="111"/>
        <end position="131"/>
    </location>
</feature>
<feature type="transmembrane region" description="Helical" evidence="1">
    <location>
        <begin position="137"/>
        <end position="157"/>
    </location>
</feature>
<feature type="transmembrane region" description="Helical" evidence="1">
    <location>
        <begin position="174"/>
        <end position="194"/>
    </location>
</feature>
<protein>
    <recommendedName>
        <fullName evidence="1">Putative manganese efflux pump MntP</fullName>
    </recommendedName>
</protein>
<gene>
    <name evidence="1" type="primary">mntP</name>
    <name type="ordered locus">BL0390</name>
</gene>